<gene>
    <name evidence="1" type="primary">psbF</name>
</gene>
<geneLocation type="chloroplast"/>
<proteinExistence type="inferred from homology"/>
<accession>Q71L83</accession>
<organism>
    <name type="scientific">Bowenia serrulata</name>
    <name type="common">Byfield fern</name>
    <name type="synonym">Bowenia spectabilis var. serrulata</name>
    <dbReference type="NCBI Taxonomy" id="13365"/>
    <lineage>
        <taxon>Eukaryota</taxon>
        <taxon>Viridiplantae</taxon>
        <taxon>Streptophyta</taxon>
        <taxon>Embryophyta</taxon>
        <taxon>Tracheophyta</taxon>
        <taxon>Spermatophyta</taxon>
        <taxon>Cycadidae</taxon>
        <taxon>Cycadales</taxon>
        <taxon>Cycadaceae</taxon>
        <taxon>Bowenia</taxon>
    </lineage>
</organism>
<protein>
    <recommendedName>
        <fullName evidence="1">Cytochrome b559 subunit beta</fullName>
    </recommendedName>
    <alternativeName>
        <fullName evidence="1">PSII reaction center subunit VI</fullName>
    </alternativeName>
</protein>
<feature type="chain" id="PRO_0000200361" description="Cytochrome b559 subunit beta">
    <location>
        <begin position="1"/>
        <end position="39"/>
    </location>
</feature>
<feature type="transmembrane region" description="Helical" evidence="1">
    <location>
        <begin position="14"/>
        <end position="30"/>
    </location>
</feature>
<feature type="binding site" description="axial binding residue" evidence="1">
    <location>
        <position position="18"/>
    </location>
    <ligand>
        <name>heme</name>
        <dbReference type="ChEBI" id="CHEBI:30413"/>
        <note>ligand shared with alpha subunit</note>
    </ligand>
    <ligandPart>
        <name>Fe</name>
        <dbReference type="ChEBI" id="CHEBI:18248"/>
    </ligandPart>
</feature>
<comment type="function">
    <text evidence="1">This b-type cytochrome is tightly associated with the reaction center of photosystem II (PSII). PSII is a light-driven water:plastoquinone oxidoreductase that uses light energy to abstract electrons from H(2)O, generating O(2) and a proton gradient subsequently used for ATP formation. It consists of a core antenna complex that captures photons, and an electron transfer chain that converts photonic excitation into a charge separation.</text>
</comment>
<comment type="cofactor">
    <cofactor evidence="1">
        <name>heme b</name>
        <dbReference type="ChEBI" id="CHEBI:60344"/>
    </cofactor>
    <text evidence="1">With its partner (PsbE) binds heme. PSII binds additional chlorophylls, carotenoids and specific lipids.</text>
</comment>
<comment type="subunit">
    <text evidence="1">Heterodimer of an alpha subunit and a beta subunit. PSII is composed of 1 copy each of membrane proteins PsbA, PsbB, PsbC, PsbD, PsbE, PsbF, PsbH, PsbI, PsbJ, PsbK, PsbL, PsbM, PsbT, PsbX, PsbY, PsbZ, Psb30/Ycf12, at least 3 peripheral proteins of the oxygen-evolving complex and a large number of cofactors. It forms dimeric complexes.</text>
</comment>
<comment type="subcellular location">
    <subcellularLocation>
        <location evidence="1">Plastid</location>
        <location evidence="1">Chloroplast thylakoid membrane</location>
        <topology evidence="1">Single-pass membrane protein</topology>
    </subcellularLocation>
</comment>
<comment type="similarity">
    <text evidence="1">Belongs to the PsbE/PsbF family.</text>
</comment>
<sequence length="39" mass="4484">MTIDRTYPIFTVRWLAVHGLAVPTVFFLGSISAMQFIQR</sequence>
<name>PSBF_BOWSE</name>
<reference key="1">
    <citation type="journal article" date="2003" name="Mol. Phylogenet. Evol.">
        <title>Inference of higher-order relationships in the cycads from a large chloroplast data set.</title>
        <authorList>
            <person name="Rai H.S."/>
            <person name="O'Brien H.E."/>
            <person name="Reeves P.A."/>
            <person name="Olmstead R.G."/>
            <person name="Graham S.W."/>
        </authorList>
    </citation>
    <scope>NUCLEOTIDE SEQUENCE [GENOMIC DNA]</scope>
</reference>
<evidence type="ECO:0000255" key="1">
    <source>
        <dbReference type="HAMAP-Rule" id="MF_00643"/>
    </source>
</evidence>
<dbReference type="EMBL" id="AF469713">
    <property type="protein sequence ID" value="AAQ05221.1"/>
    <property type="molecule type" value="Genomic_DNA"/>
</dbReference>
<dbReference type="RefSeq" id="YP_009113553.1">
    <property type="nucleotide sequence ID" value="NC_026036.1"/>
</dbReference>
<dbReference type="SMR" id="Q71L83"/>
<dbReference type="GeneID" id="22831938"/>
<dbReference type="GO" id="GO:0009535">
    <property type="term" value="C:chloroplast thylakoid membrane"/>
    <property type="evidence" value="ECO:0007669"/>
    <property type="project" value="UniProtKB-SubCell"/>
</dbReference>
<dbReference type="GO" id="GO:0009539">
    <property type="term" value="C:photosystem II reaction center"/>
    <property type="evidence" value="ECO:0007669"/>
    <property type="project" value="InterPro"/>
</dbReference>
<dbReference type="GO" id="GO:0009055">
    <property type="term" value="F:electron transfer activity"/>
    <property type="evidence" value="ECO:0007669"/>
    <property type="project" value="UniProtKB-UniRule"/>
</dbReference>
<dbReference type="GO" id="GO:0020037">
    <property type="term" value="F:heme binding"/>
    <property type="evidence" value="ECO:0007669"/>
    <property type="project" value="InterPro"/>
</dbReference>
<dbReference type="GO" id="GO:0005506">
    <property type="term" value="F:iron ion binding"/>
    <property type="evidence" value="ECO:0007669"/>
    <property type="project" value="UniProtKB-UniRule"/>
</dbReference>
<dbReference type="GO" id="GO:0009767">
    <property type="term" value="P:photosynthetic electron transport chain"/>
    <property type="evidence" value="ECO:0007669"/>
    <property type="project" value="InterPro"/>
</dbReference>
<dbReference type="HAMAP" id="MF_00643">
    <property type="entry name" value="PSII_PsbF"/>
    <property type="match status" value="1"/>
</dbReference>
<dbReference type="InterPro" id="IPR006241">
    <property type="entry name" value="PSII_cyt_b559_bsu"/>
</dbReference>
<dbReference type="InterPro" id="IPR006216">
    <property type="entry name" value="PSII_cyt_b559_CS"/>
</dbReference>
<dbReference type="InterPro" id="IPR013081">
    <property type="entry name" value="PSII_cyt_b559_N"/>
</dbReference>
<dbReference type="NCBIfam" id="TIGR01333">
    <property type="entry name" value="cyt_b559_beta"/>
    <property type="match status" value="1"/>
</dbReference>
<dbReference type="Pfam" id="PF00283">
    <property type="entry name" value="Cytochrom_B559"/>
    <property type="match status" value="1"/>
</dbReference>
<dbReference type="PIRSF" id="PIRSF000037">
    <property type="entry name" value="PsbF"/>
    <property type="match status" value="1"/>
</dbReference>
<dbReference type="SUPFAM" id="SSF161045">
    <property type="entry name" value="Cytochrome b559 subunits"/>
    <property type="match status" value="1"/>
</dbReference>
<dbReference type="PROSITE" id="PS00537">
    <property type="entry name" value="CYTOCHROME_B559"/>
    <property type="match status" value="1"/>
</dbReference>
<keyword id="KW-0150">Chloroplast</keyword>
<keyword id="KW-0249">Electron transport</keyword>
<keyword id="KW-0349">Heme</keyword>
<keyword id="KW-0408">Iron</keyword>
<keyword id="KW-0472">Membrane</keyword>
<keyword id="KW-0479">Metal-binding</keyword>
<keyword id="KW-0602">Photosynthesis</keyword>
<keyword id="KW-0604">Photosystem II</keyword>
<keyword id="KW-0934">Plastid</keyword>
<keyword id="KW-0793">Thylakoid</keyword>
<keyword id="KW-0812">Transmembrane</keyword>
<keyword id="KW-1133">Transmembrane helix</keyword>
<keyword id="KW-0813">Transport</keyword>